<accession>Q3SHL9</accession>
<evidence type="ECO:0000255" key="1">
    <source>
        <dbReference type="HAMAP-Rule" id="MF_00133"/>
    </source>
</evidence>
<gene>
    <name evidence="1" type="primary">trpB</name>
    <name type="ordered locus">Tbd_1914</name>
</gene>
<comment type="function">
    <text evidence="1">The beta subunit is responsible for the synthesis of L-tryptophan from indole and L-serine.</text>
</comment>
<comment type="catalytic activity">
    <reaction evidence="1">
        <text>(1S,2R)-1-C-(indol-3-yl)glycerol 3-phosphate + L-serine = D-glyceraldehyde 3-phosphate + L-tryptophan + H2O</text>
        <dbReference type="Rhea" id="RHEA:10532"/>
        <dbReference type="ChEBI" id="CHEBI:15377"/>
        <dbReference type="ChEBI" id="CHEBI:33384"/>
        <dbReference type="ChEBI" id="CHEBI:57912"/>
        <dbReference type="ChEBI" id="CHEBI:58866"/>
        <dbReference type="ChEBI" id="CHEBI:59776"/>
        <dbReference type="EC" id="4.2.1.20"/>
    </reaction>
</comment>
<comment type="cofactor">
    <cofactor evidence="1">
        <name>pyridoxal 5'-phosphate</name>
        <dbReference type="ChEBI" id="CHEBI:597326"/>
    </cofactor>
</comment>
<comment type="pathway">
    <text evidence="1">Amino-acid biosynthesis; L-tryptophan biosynthesis; L-tryptophan from chorismate: step 5/5.</text>
</comment>
<comment type="subunit">
    <text evidence="1">Tetramer of two alpha and two beta chains.</text>
</comment>
<comment type="similarity">
    <text evidence="1">Belongs to the TrpB family.</text>
</comment>
<feature type="chain" id="PRO_1000095834" description="Tryptophan synthase beta chain">
    <location>
        <begin position="1"/>
        <end position="399"/>
    </location>
</feature>
<feature type="modified residue" description="N6-(pyridoxal phosphate)lysine" evidence="1">
    <location>
        <position position="92"/>
    </location>
</feature>
<proteinExistence type="inferred from homology"/>
<organism>
    <name type="scientific">Thiobacillus denitrificans (strain ATCC 25259 / T1)</name>
    <dbReference type="NCBI Taxonomy" id="292415"/>
    <lineage>
        <taxon>Bacteria</taxon>
        <taxon>Pseudomonadati</taxon>
        <taxon>Pseudomonadota</taxon>
        <taxon>Betaproteobacteria</taxon>
        <taxon>Nitrosomonadales</taxon>
        <taxon>Thiobacillaceae</taxon>
        <taxon>Thiobacillus</taxon>
    </lineage>
</organism>
<keyword id="KW-0028">Amino-acid biosynthesis</keyword>
<keyword id="KW-0057">Aromatic amino acid biosynthesis</keyword>
<keyword id="KW-0456">Lyase</keyword>
<keyword id="KW-0663">Pyridoxal phosphate</keyword>
<keyword id="KW-1185">Reference proteome</keyword>
<keyword id="KW-0822">Tryptophan biosynthesis</keyword>
<name>TRPB_THIDA</name>
<dbReference type="EC" id="4.2.1.20" evidence="1"/>
<dbReference type="EMBL" id="CP000116">
    <property type="protein sequence ID" value="AAZ97867.1"/>
    <property type="molecule type" value="Genomic_DNA"/>
</dbReference>
<dbReference type="RefSeq" id="WP_011312426.1">
    <property type="nucleotide sequence ID" value="NC_007404.1"/>
</dbReference>
<dbReference type="SMR" id="Q3SHL9"/>
<dbReference type="STRING" id="292415.Tbd_1914"/>
<dbReference type="KEGG" id="tbd:Tbd_1914"/>
<dbReference type="eggNOG" id="COG0133">
    <property type="taxonomic scope" value="Bacteria"/>
</dbReference>
<dbReference type="HOGENOM" id="CLU_016734_3_1_4"/>
<dbReference type="OrthoDB" id="9766131at2"/>
<dbReference type="UniPathway" id="UPA00035">
    <property type="reaction ID" value="UER00044"/>
</dbReference>
<dbReference type="Proteomes" id="UP000008291">
    <property type="component" value="Chromosome"/>
</dbReference>
<dbReference type="GO" id="GO:0005737">
    <property type="term" value="C:cytoplasm"/>
    <property type="evidence" value="ECO:0007669"/>
    <property type="project" value="TreeGrafter"/>
</dbReference>
<dbReference type="GO" id="GO:0004834">
    <property type="term" value="F:tryptophan synthase activity"/>
    <property type="evidence" value="ECO:0007669"/>
    <property type="project" value="UniProtKB-UniRule"/>
</dbReference>
<dbReference type="CDD" id="cd06446">
    <property type="entry name" value="Trp-synth_B"/>
    <property type="match status" value="1"/>
</dbReference>
<dbReference type="FunFam" id="3.40.50.1100:FF:000001">
    <property type="entry name" value="Tryptophan synthase beta chain"/>
    <property type="match status" value="1"/>
</dbReference>
<dbReference type="FunFam" id="3.40.50.1100:FF:000004">
    <property type="entry name" value="Tryptophan synthase beta chain"/>
    <property type="match status" value="1"/>
</dbReference>
<dbReference type="Gene3D" id="3.40.50.1100">
    <property type="match status" value="2"/>
</dbReference>
<dbReference type="HAMAP" id="MF_00133">
    <property type="entry name" value="Trp_synth_beta"/>
    <property type="match status" value="1"/>
</dbReference>
<dbReference type="InterPro" id="IPR006653">
    <property type="entry name" value="Trp_synth_b_CS"/>
</dbReference>
<dbReference type="InterPro" id="IPR006654">
    <property type="entry name" value="Trp_synth_beta"/>
</dbReference>
<dbReference type="InterPro" id="IPR023026">
    <property type="entry name" value="Trp_synth_beta/beta-like"/>
</dbReference>
<dbReference type="InterPro" id="IPR001926">
    <property type="entry name" value="TrpB-like_PALP"/>
</dbReference>
<dbReference type="InterPro" id="IPR036052">
    <property type="entry name" value="TrpB-like_PALP_sf"/>
</dbReference>
<dbReference type="NCBIfam" id="TIGR00263">
    <property type="entry name" value="trpB"/>
    <property type="match status" value="1"/>
</dbReference>
<dbReference type="PANTHER" id="PTHR48077:SF3">
    <property type="entry name" value="TRYPTOPHAN SYNTHASE"/>
    <property type="match status" value="1"/>
</dbReference>
<dbReference type="PANTHER" id="PTHR48077">
    <property type="entry name" value="TRYPTOPHAN SYNTHASE-RELATED"/>
    <property type="match status" value="1"/>
</dbReference>
<dbReference type="Pfam" id="PF00291">
    <property type="entry name" value="PALP"/>
    <property type="match status" value="1"/>
</dbReference>
<dbReference type="PIRSF" id="PIRSF001413">
    <property type="entry name" value="Trp_syn_beta"/>
    <property type="match status" value="1"/>
</dbReference>
<dbReference type="SUPFAM" id="SSF53686">
    <property type="entry name" value="Tryptophan synthase beta subunit-like PLP-dependent enzymes"/>
    <property type="match status" value="1"/>
</dbReference>
<dbReference type="PROSITE" id="PS00168">
    <property type="entry name" value="TRP_SYNTHASE_BETA"/>
    <property type="match status" value="1"/>
</dbReference>
<reference key="1">
    <citation type="journal article" date="2006" name="J. Bacteriol.">
        <title>The genome sequence of the obligately chemolithoautotrophic, facultatively anaerobic bacterium Thiobacillus denitrificans.</title>
        <authorList>
            <person name="Beller H.R."/>
            <person name="Chain P.S."/>
            <person name="Letain T.E."/>
            <person name="Chakicherla A."/>
            <person name="Larimer F.W."/>
            <person name="Richardson P.M."/>
            <person name="Coleman M.A."/>
            <person name="Wood A.P."/>
            <person name="Kelly D.P."/>
        </authorList>
    </citation>
    <scope>NUCLEOTIDE SEQUENCE [LARGE SCALE GENOMIC DNA]</scope>
    <source>
        <strain>ATCC 25259 / T1</strain>
    </source>
</reference>
<protein>
    <recommendedName>
        <fullName evidence="1">Tryptophan synthase beta chain</fullName>
        <ecNumber evidence="1">4.2.1.20</ecNumber>
    </recommendedName>
</protein>
<sequence>MKLTDLPDSRGHFGPYGGIFVSETLMAALDALRVEYDAACRDPGFMAEFEYELKHYVGRPSPVYHARRLSEEYGGAQIYLKREDLNHTGAHKINNTIGQALLARRMGKKRVIAETGAGQHGVASATVAARYGMECVVYMGAEDVARQAPNVFRMKLLGATVVPVSSGSKTLKDALNEAMRDWVTNVESTFYILGTAAGPHPYPMLVRDFQCVIGRECIAQMPELVGRQPDAVVACVGGGSNAIGIFHPYIPHENVRLIGVEAGGSGVASGKHAAPLTAGTPGVLHGFRSYLMQDENGQIIETHSVSAGLDYPGVGPEHSYLKDAGRAEYVPINDDEALAAFHDLCRFEGIIPALESSHAVAQAKKLAPTMKKDQVILVNLSGRGDKDINTVAKAAGITL</sequence>